<organism>
    <name type="scientific">Cytophaga hutchinsonii (strain ATCC 33406 / DSM 1761 / CIP 103989 / NBRC 15051 / NCIMB 9469 / D465)</name>
    <dbReference type="NCBI Taxonomy" id="269798"/>
    <lineage>
        <taxon>Bacteria</taxon>
        <taxon>Pseudomonadati</taxon>
        <taxon>Bacteroidota</taxon>
        <taxon>Cytophagia</taxon>
        <taxon>Cytophagales</taxon>
        <taxon>Cytophagaceae</taxon>
        <taxon>Cytophaga</taxon>
    </lineage>
</organism>
<name>ATPG_CYTH3</name>
<comment type="function">
    <text evidence="1">Produces ATP from ADP in the presence of a proton gradient across the membrane. The gamma chain is believed to be important in regulating ATPase activity and the flow of protons through the CF(0) complex.</text>
</comment>
<comment type="subunit">
    <text evidence="1">F-type ATPases have 2 components, CF(1) - the catalytic core - and CF(0) - the membrane proton channel. CF(1) has five subunits: alpha(3), beta(3), gamma(1), delta(1), epsilon(1). CF(0) has three main subunits: a, b and c.</text>
</comment>
<comment type="subcellular location">
    <subcellularLocation>
        <location evidence="1">Cell inner membrane</location>
        <topology evidence="1">Peripheral membrane protein</topology>
    </subcellularLocation>
</comment>
<comment type="similarity">
    <text evidence="1">Belongs to the ATPase gamma chain family.</text>
</comment>
<protein>
    <recommendedName>
        <fullName evidence="1">ATP synthase gamma chain</fullName>
    </recommendedName>
    <alternativeName>
        <fullName evidence="1">ATP synthase F1 sector gamma subunit</fullName>
    </alternativeName>
    <alternativeName>
        <fullName evidence="1">F-ATPase gamma subunit</fullName>
    </alternativeName>
</protein>
<dbReference type="EMBL" id="CP000383">
    <property type="protein sequence ID" value="ABG57476.1"/>
    <property type="molecule type" value="Genomic_DNA"/>
</dbReference>
<dbReference type="RefSeq" id="WP_011583592.1">
    <property type="nucleotide sequence ID" value="NC_008255.1"/>
</dbReference>
<dbReference type="SMR" id="Q11YP0"/>
<dbReference type="STRING" id="269798.CHU_0184"/>
<dbReference type="KEGG" id="chu:CHU_0184"/>
<dbReference type="eggNOG" id="COG0224">
    <property type="taxonomic scope" value="Bacteria"/>
</dbReference>
<dbReference type="HOGENOM" id="CLU_050669_0_1_10"/>
<dbReference type="OrthoDB" id="9812769at2"/>
<dbReference type="Proteomes" id="UP000001822">
    <property type="component" value="Chromosome"/>
</dbReference>
<dbReference type="GO" id="GO:0005886">
    <property type="term" value="C:plasma membrane"/>
    <property type="evidence" value="ECO:0007669"/>
    <property type="project" value="UniProtKB-SubCell"/>
</dbReference>
<dbReference type="GO" id="GO:0045259">
    <property type="term" value="C:proton-transporting ATP synthase complex"/>
    <property type="evidence" value="ECO:0007669"/>
    <property type="project" value="UniProtKB-KW"/>
</dbReference>
<dbReference type="GO" id="GO:0005524">
    <property type="term" value="F:ATP binding"/>
    <property type="evidence" value="ECO:0007669"/>
    <property type="project" value="UniProtKB-UniRule"/>
</dbReference>
<dbReference type="GO" id="GO:0046933">
    <property type="term" value="F:proton-transporting ATP synthase activity, rotational mechanism"/>
    <property type="evidence" value="ECO:0007669"/>
    <property type="project" value="UniProtKB-UniRule"/>
</dbReference>
<dbReference type="GO" id="GO:0042777">
    <property type="term" value="P:proton motive force-driven plasma membrane ATP synthesis"/>
    <property type="evidence" value="ECO:0007669"/>
    <property type="project" value="UniProtKB-UniRule"/>
</dbReference>
<dbReference type="CDD" id="cd12151">
    <property type="entry name" value="F1-ATPase_gamma"/>
    <property type="match status" value="1"/>
</dbReference>
<dbReference type="FunFam" id="1.10.287.80:FF:000003">
    <property type="entry name" value="ATP synthase gamma chain, chloroplastic"/>
    <property type="match status" value="1"/>
</dbReference>
<dbReference type="Gene3D" id="3.40.1380.10">
    <property type="match status" value="1"/>
</dbReference>
<dbReference type="Gene3D" id="1.10.287.80">
    <property type="entry name" value="ATP synthase, gamma subunit, helix hairpin domain"/>
    <property type="match status" value="1"/>
</dbReference>
<dbReference type="HAMAP" id="MF_00815">
    <property type="entry name" value="ATP_synth_gamma_bact"/>
    <property type="match status" value="1"/>
</dbReference>
<dbReference type="InterPro" id="IPR035968">
    <property type="entry name" value="ATP_synth_F1_ATPase_gsu"/>
</dbReference>
<dbReference type="InterPro" id="IPR000131">
    <property type="entry name" value="ATP_synth_F1_gsu"/>
</dbReference>
<dbReference type="InterPro" id="IPR023632">
    <property type="entry name" value="ATP_synth_F1_gsu_CS"/>
</dbReference>
<dbReference type="NCBIfam" id="TIGR01146">
    <property type="entry name" value="ATPsyn_F1gamma"/>
    <property type="match status" value="1"/>
</dbReference>
<dbReference type="PANTHER" id="PTHR11693">
    <property type="entry name" value="ATP SYNTHASE GAMMA CHAIN"/>
    <property type="match status" value="1"/>
</dbReference>
<dbReference type="PANTHER" id="PTHR11693:SF22">
    <property type="entry name" value="ATP SYNTHASE SUBUNIT GAMMA, MITOCHONDRIAL"/>
    <property type="match status" value="1"/>
</dbReference>
<dbReference type="Pfam" id="PF00231">
    <property type="entry name" value="ATP-synt"/>
    <property type="match status" value="1"/>
</dbReference>
<dbReference type="PRINTS" id="PR00126">
    <property type="entry name" value="ATPASEGAMMA"/>
</dbReference>
<dbReference type="SUPFAM" id="SSF52943">
    <property type="entry name" value="ATP synthase (F1-ATPase), gamma subunit"/>
    <property type="match status" value="1"/>
</dbReference>
<dbReference type="PROSITE" id="PS00153">
    <property type="entry name" value="ATPASE_GAMMA"/>
    <property type="match status" value="1"/>
</dbReference>
<feature type="chain" id="PRO_1000053199" description="ATP synthase gamma chain">
    <location>
        <begin position="1"/>
        <end position="295"/>
    </location>
</feature>
<proteinExistence type="inferred from homology"/>
<keyword id="KW-0066">ATP synthesis</keyword>
<keyword id="KW-0997">Cell inner membrane</keyword>
<keyword id="KW-1003">Cell membrane</keyword>
<keyword id="KW-0139">CF(1)</keyword>
<keyword id="KW-0375">Hydrogen ion transport</keyword>
<keyword id="KW-0406">Ion transport</keyword>
<keyword id="KW-0472">Membrane</keyword>
<keyword id="KW-1185">Reference proteome</keyword>
<keyword id="KW-0813">Transport</keyword>
<evidence type="ECO:0000255" key="1">
    <source>
        <dbReference type="HAMAP-Rule" id="MF_00815"/>
    </source>
</evidence>
<gene>
    <name evidence="1" type="primary">atpG</name>
    <name type="ordered locus">CHU_0184</name>
</gene>
<sequence length="295" mass="32928">MPSLKEVRNRIASVNSTQQITKAMKMVSAAKLRRAQDRAMKIRPYAEKLNGILQNIAASLEDGADNVYAEERELKRLLIVVVTSDRGLAGAFNANIVKAANALIEEKYSNLYQANKVDFICIGKKGAEAITKRGESANLEYQGLFQNLSFDTARGASEYVMNAYLTGKYDRVEVIYNEFKNVATQIIRTEQFLPIKGQALSAVKHSATEVDYIFEPSKEEIVKELIPKSLKVQFYKYLLESNASEHGARMTAMDKATENAKEMLKALKLTYNRSRQAAITKEILEIVGGAEALNN</sequence>
<reference key="1">
    <citation type="journal article" date="2007" name="Appl. Environ. Microbiol.">
        <title>Genome sequence of the cellulolytic gliding bacterium Cytophaga hutchinsonii.</title>
        <authorList>
            <person name="Xie G."/>
            <person name="Bruce D.C."/>
            <person name="Challacombe J.F."/>
            <person name="Chertkov O."/>
            <person name="Detter J.C."/>
            <person name="Gilna P."/>
            <person name="Han C.S."/>
            <person name="Lucas S."/>
            <person name="Misra M."/>
            <person name="Myers G.L."/>
            <person name="Richardson P."/>
            <person name="Tapia R."/>
            <person name="Thayer N."/>
            <person name="Thompson L.S."/>
            <person name="Brettin T.S."/>
            <person name="Henrissat B."/>
            <person name="Wilson D.B."/>
            <person name="McBride M.J."/>
        </authorList>
    </citation>
    <scope>NUCLEOTIDE SEQUENCE [LARGE SCALE GENOMIC DNA]</scope>
    <source>
        <strain>ATCC 33406 / DSM 1761 / JCM 20678 / CIP 103989 / IAM 12607 / NBRC 15051 / NCIMB 9469 / D465</strain>
    </source>
</reference>
<accession>Q11YP0</accession>